<feature type="chain" id="PRO_0000409377" description="Eugenol O-methyltransferase">
    <location>
        <begin position="1"/>
        <end position="376"/>
    </location>
</feature>
<feature type="active site" description="Proton acceptor" evidence="1">
    <location>
        <position position="280"/>
    </location>
</feature>
<feature type="binding site" evidence="1">
    <location>
        <position position="219"/>
    </location>
    <ligand>
        <name>S-adenosyl-L-methionine</name>
        <dbReference type="ChEBI" id="CHEBI:59789"/>
    </ligand>
</feature>
<feature type="binding site" evidence="1">
    <location>
        <position position="242"/>
    </location>
    <ligand>
        <name>S-adenosyl-L-methionine</name>
        <dbReference type="ChEBI" id="CHEBI:59789"/>
    </ligand>
</feature>
<feature type="binding site" evidence="1">
    <location>
        <position position="263"/>
    </location>
    <ligand>
        <name>S-adenosyl-L-methionine</name>
        <dbReference type="ChEBI" id="CHEBI:59789"/>
    </ligand>
</feature>
<feature type="binding site" evidence="1">
    <location>
        <position position="276"/>
    </location>
    <ligand>
        <name>S-adenosyl-L-methionine</name>
        <dbReference type="ChEBI" id="CHEBI:59789"/>
    </ligand>
</feature>
<name>OMT1_SORBI</name>
<proteinExistence type="evidence at protein level"/>
<evidence type="ECO:0000255" key="1">
    <source>
        <dbReference type="PROSITE-ProRule" id="PRU01020"/>
    </source>
</evidence>
<evidence type="ECO:0000269" key="2">
    <source>
    </source>
</evidence>
<evidence type="ECO:0000305" key="3"/>
<organism>
    <name type="scientific">Sorghum bicolor</name>
    <name type="common">Sorghum</name>
    <name type="synonym">Sorghum vulgare</name>
    <dbReference type="NCBI Taxonomy" id="4558"/>
    <lineage>
        <taxon>Eukaryota</taxon>
        <taxon>Viridiplantae</taxon>
        <taxon>Streptophyta</taxon>
        <taxon>Embryophyta</taxon>
        <taxon>Tracheophyta</taxon>
        <taxon>Spermatophyta</taxon>
        <taxon>Magnoliopsida</taxon>
        <taxon>Liliopsida</taxon>
        <taxon>Poales</taxon>
        <taxon>Poaceae</taxon>
        <taxon>PACMAD clade</taxon>
        <taxon>Panicoideae</taxon>
        <taxon>Andropogonodae</taxon>
        <taxon>Andropogoneae</taxon>
        <taxon>Sorghinae</taxon>
        <taxon>Sorghum</taxon>
    </lineage>
</organism>
<comment type="function">
    <text evidence="2">O-methyltransferase. Substrate preference is eugenol &gt;&gt; orcinol monomethyl ether &gt; resorcinol monomethyl ether.</text>
</comment>
<comment type="catalytic activity">
    <reaction evidence="2">
        <text>(E)-isoeugenol + S-adenosyl-L-methionine = (E)-isomethyleugenol + S-adenosyl-L-homocysteine + H(+)</text>
        <dbReference type="Rhea" id="RHEA:17081"/>
        <dbReference type="ChEBI" id="CHEBI:6877"/>
        <dbReference type="ChEBI" id="CHEBI:15378"/>
        <dbReference type="ChEBI" id="CHEBI:50545"/>
        <dbReference type="ChEBI" id="CHEBI:57856"/>
        <dbReference type="ChEBI" id="CHEBI:59789"/>
        <dbReference type="EC" id="2.1.1.146"/>
    </reaction>
</comment>
<comment type="subunit">
    <text evidence="3">Homodimer.</text>
</comment>
<comment type="tissue specificity">
    <text evidence="2">Expressed predominantly in root hairs.</text>
</comment>
<comment type="similarity">
    <text evidence="1">Belongs to the class I-like SAM-binding methyltransferase superfamily. Cation-independent O-methyltransferase family. COMT subfamily.</text>
</comment>
<comment type="sequence caution" evidence="3">
    <conflict type="erroneous gene model prediction">
        <sequence resource="EMBL-CDS" id="EES14631"/>
    </conflict>
</comment>
<protein>
    <recommendedName>
        <fullName>Eugenol O-methyltransferase</fullName>
        <ecNumber>2.1.1.146</ecNumber>
    </recommendedName>
    <alternativeName>
        <fullName>O-methyltransferase 1</fullName>
        <shortName>SbOMT1</shortName>
    </alternativeName>
</protein>
<gene>
    <name type="primary">EOMT</name>
    <name type="synonym">OMT1</name>
    <name type="ordered locus">Sb07g004660</name>
</gene>
<dbReference type="EC" id="2.1.1.146"/>
<dbReference type="EMBL" id="EF189707">
    <property type="protein sequence ID" value="ABP01563.1"/>
    <property type="molecule type" value="mRNA"/>
</dbReference>
<dbReference type="EMBL" id="CM000766">
    <property type="protein sequence ID" value="EES14631.1"/>
    <property type="status" value="ALT_SEQ"/>
    <property type="molecule type" value="Genomic_DNA"/>
</dbReference>
<dbReference type="SMR" id="A8QW52"/>
<dbReference type="STRING" id="4558.A8QW52"/>
<dbReference type="EnsemblPlants" id="KXG24554">
    <property type="protein sequence ID" value="KXG24554"/>
    <property type="gene ID" value="SORBI_3007G058400"/>
</dbReference>
<dbReference type="Gramene" id="KXG24554">
    <property type="protein sequence ID" value="KXG24554"/>
    <property type="gene ID" value="SORBI_3007G058400"/>
</dbReference>
<dbReference type="KEGG" id="sbi:8080888"/>
<dbReference type="eggNOG" id="KOG3178">
    <property type="taxonomic scope" value="Eukaryota"/>
</dbReference>
<dbReference type="InParanoid" id="A8QW52"/>
<dbReference type="OMA" id="RTEREFC"/>
<dbReference type="OrthoDB" id="1606438at2759"/>
<dbReference type="Proteomes" id="UP000000768">
    <property type="component" value="Chromosome 7"/>
</dbReference>
<dbReference type="ExpressionAtlas" id="A8QW52">
    <property type="expression patterns" value="baseline and differential"/>
</dbReference>
<dbReference type="GO" id="GO:0050630">
    <property type="term" value="F:(iso)eugenol O-methyltransferase activity"/>
    <property type="evidence" value="ECO:0007669"/>
    <property type="project" value="UniProtKB-EC"/>
</dbReference>
<dbReference type="GO" id="GO:0008171">
    <property type="term" value="F:O-methyltransferase activity"/>
    <property type="evidence" value="ECO:0000314"/>
    <property type="project" value="UniProtKB"/>
</dbReference>
<dbReference type="GO" id="GO:0046983">
    <property type="term" value="F:protein dimerization activity"/>
    <property type="evidence" value="ECO:0007669"/>
    <property type="project" value="InterPro"/>
</dbReference>
<dbReference type="GO" id="GO:0008757">
    <property type="term" value="F:S-adenosylmethionine-dependent methyltransferase activity"/>
    <property type="evidence" value="ECO:0000314"/>
    <property type="project" value="UniProtKB"/>
</dbReference>
<dbReference type="GO" id="GO:0009058">
    <property type="term" value="P:biosynthetic process"/>
    <property type="evidence" value="ECO:0000318"/>
    <property type="project" value="GO_Central"/>
</dbReference>
<dbReference type="GO" id="GO:0032259">
    <property type="term" value="P:methylation"/>
    <property type="evidence" value="ECO:0000314"/>
    <property type="project" value="UniProtKB"/>
</dbReference>
<dbReference type="FunFam" id="1.10.10.10:FF:000357">
    <property type="entry name" value="Caffeic acid 3-O-methyltransferase"/>
    <property type="match status" value="1"/>
</dbReference>
<dbReference type="Gene3D" id="3.40.50.150">
    <property type="entry name" value="Vaccinia Virus protein VP39"/>
    <property type="match status" value="1"/>
</dbReference>
<dbReference type="Gene3D" id="1.10.10.10">
    <property type="entry name" value="Winged helix-like DNA-binding domain superfamily/Winged helix DNA-binding domain"/>
    <property type="match status" value="1"/>
</dbReference>
<dbReference type="InterPro" id="IPR016461">
    <property type="entry name" value="COMT-like"/>
</dbReference>
<dbReference type="InterPro" id="IPR001077">
    <property type="entry name" value="O_MeTrfase_dom"/>
</dbReference>
<dbReference type="InterPro" id="IPR012967">
    <property type="entry name" value="Plant_O-MeTrfase_dimerisation"/>
</dbReference>
<dbReference type="InterPro" id="IPR029063">
    <property type="entry name" value="SAM-dependent_MTases_sf"/>
</dbReference>
<dbReference type="InterPro" id="IPR036388">
    <property type="entry name" value="WH-like_DNA-bd_sf"/>
</dbReference>
<dbReference type="InterPro" id="IPR036390">
    <property type="entry name" value="WH_DNA-bd_sf"/>
</dbReference>
<dbReference type="PANTHER" id="PTHR11746">
    <property type="entry name" value="O-METHYLTRANSFERASE"/>
    <property type="match status" value="1"/>
</dbReference>
<dbReference type="Pfam" id="PF08100">
    <property type="entry name" value="Dimerisation"/>
    <property type="match status" value="1"/>
</dbReference>
<dbReference type="Pfam" id="PF00891">
    <property type="entry name" value="Methyltransf_2"/>
    <property type="match status" value="1"/>
</dbReference>
<dbReference type="PIRSF" id="PIRSF005739">
    <property type="entry name" value="O-mtase"/>
    <property type="match status" value="1"/>
</dbReference>
<dbReference type="SUPFAM" id="SSF53335">
    <property type="entry name" value="S-adenosyl-L-methionine-dependent methyltransferases"/>
    <property type="match status" value="1"/>
</dbReference>
<dbReference type="SUPFAM" id="SSF46785">
    <property type="entry name" value="Winged helix' DNA-binding domain"/>
    <property type="match status" value="1"/>
</dbReference>
<dbReference type="PROSITE" id="PS51683">
    <property type="entry name" value="SAM_OMT_II"/>
    <property type="match status" value="1"/>
</dbReference>
<accession>A8QW52</accession>
<accession>C5YHU3</accession>
<reference key="1">
    <citation type="journal article" date="2008" name="J. Biol. Chem.">
        <title>A functional genomics investigation of allelochemical biosynthesis in Sorghum bicolor root hairs.</title>
        <authorList>
            <person name="Baerson S.R."/>
            <person name="Dayan F.E."/>
            <person name="Rimando A.M."/>
            <person name="Nanayakkara N.P."/>
            <person name="Liu C.J."/>
            <person name="Schroder J."/>
            <person name="Fishbein M."/>
            <person name="Pan Z."/>
            <person name="Kagan I.A."/>
            <person name="Pratt L.H."/>
            <person name="Cordonnier-Pratt M.M."/>
            <person name="Duke S.O."/>
        </authorList>
    </citation>
    <scope>NUCLEOTIDE SEQUENCE [MRNA]</scope>
    <scope>CATALYTIC ACTIVITY</scope>
    <scope>FUNCTION</scope>
    <scope>TISSUE SPECIFICITY</scope>
    <source>
        <strain>cv. BTx623</strain>
    </source>
</reference>
<reference key="2">
    <citation type="journal article" date="2009" name="Nature">
        <title>The Sorghum bicolor genome and the diversification of grasses.</title>
        <authorList>
            <person name="Paterson A.H."/>
            <person name="Bowers J.E."/>
            <person name="Bruggmann R."/>
            <person name="Dubchak I."/>
            <person name="Grimwood J."/>
            <person name="Gundlach H."/>
            <person name="Haberer G."/>
            <person name="Hellsten U."/>
            <person name="Mitros T."/>
            <person name="Poliakov A."/>
            <person name="Schmutz J."/>
            <person name="Spannagl M."/>
            <person name="Tang H."/>
            <person name="Wang X."/>
            <person name="Wicker T."/>
            <person name="Bharti A.K."/>
            <person name="Chapman J."/>
            <person name="Feltus F.A."/>
            <person name="Gowik U."/>
            <person name="Grigoriev I.V."/>
            <person name="Lyons E."/>
            <person name="Maher C.A."/>
            <person name="Martis M."/>
            <person name="Narechania A."/>
            <person name="Otillar R.P."/>
            <person name="Penning B.W."/>
            <person name="Salamov A.A."/>
            <person name="Wang Y."/>
            <person name="Zhang L."/>
            <person name="Carpita N.C."/>
            <person name="Freeling M."/>
            <person name="Gingle A.R."/>
            <person name="Hash C.T."/>
            <person name="Keller B."/>
            <person name="Klein P."/>
            <person name="Kresovich S."/>
            <person name="McCann M.C."/>
            <person name="Ming R."/>
            <person name="Peterson D.G."/>
            <person name="Mehboob-ur-Rahman M."/>
            <person name="Ware D."/>
            <person name="Westhoff P."/>
            <person name="Mayer K.F.X."/>
            <person name="Messing J."/>
            <person name="Rokhsar D.S."/>
        </authorList>
    </citation>
    <scope>NUCLEOTIDE SEQUENCE [LARGE SCALE GENOMIC DNA]</scope>
    <source>
        <strain>cv. BTx623</strain>
    </source>
</reference>
<reference key="3">
    <citation type="journal article" date="2018" name="Plant J.">
        <title>The Sorghum bicolor reference genome: improved assembly, gene annotations, a transcriptome atlas, and signatures of genome organization.</title>
        <authorList>
            <person name="McCormick R.F."/>
            <person name="Truong S.K."/>
            <person name="Sreedasyam A."/>
            <person name="Jenkins J."/>
            <person name="Shu S."/>
            <person name="Sims D."/>
            <person name="Kennedy M."/>
            <person name="Amirebrahimi M."/>
            <person name="Weers B.D."/>
            <person name="McKinley B."/>
            <person name="Mattison A."/>
            <person name="Morishige D.T."/>
            <person name="Grimwood J."/>
            <person name="Schmutz J."/>
            <person name="Mullet J.E."/>
        </authorList>
    </citation>
    <scope>GENOME REANNOTATION</scope>
    <source>
        <strain>cv. BTx623</strain>
    </source>
</reference>
<keyword id="KW-0489">Methyltransferase</keyword>
<keyword id="KW-1185">Reference proteome</keyword>
<keyword id="KW-0949">S-adenosyl-L-methionine</keyword>
<keyword id="KW-0808">Transferase</keyword>
<sequence length="376" mass="40847">MASYTSTSGQFAVGKVAAANQDDETCMHALKLLGGLAVPFTIKAVIELGIMDLLLAADRAMTAEALTAALLCPAPAPAAAAAMVDRMLRFLASHGVVRCATESEELGSDDGKSCRRYAAAPVCKWFARGGGVESVVPMGFWMTSTTNMETWHNIKDGVLAGETPFDKAYGMPVFEYLGANGTMNTLFNEAMASHSMIITKRLLEVFRGFENYSVLVDVGGGNGTTMQMIRSQYENISGINYDLPHVIAQASPIEGVEHVAGNMFDNIPRGDAIILKWILHNWGDKECVKILKNCYTALPVNGTVIILEYILPETPEETLASQLAFDFDLGMMLFFGASGKERTEKELLELAREAGFSGDYTATYIFANVWAHEFTK</sequence>